<evidence type="ECO:0000255" key="1">
    <source>
        <dbReference type="HAMAP-Rule" id="MF_00027"/>
    </source>
</evidence>
<keyword id="KW-0067">ATP-binding</keyword>
<keyword id="KW-0169">Cobalamin biosynthesis</keyword>
<keyword id="KW-0315">Glutamine amidotransferase</keyword>
<keyword id="KW-0436">Ligase</keyword>
<keyword id="KW-0460">Magnesium</keyword>
<keyword id="KW-0547">Nucleotide-binding</keyword>
<keyword id="KW-1185">Reference proteome</keyword>
<reference key="1">
    <citation type="journal article" date="2001" name="Proc. Natl. Acad. Sci. U.S.A.">
        <title>Analysis of the chromosome sequence of the legume symbiont Sinorhizobium meliloti strain 1021.</title>
        <authorList>
            <person name="Capela D."/>
            <person name="Barloy-Hubler F."/>
            <person name="Gouzy J."/>
            <person name="Bothe G."/>
            <person name="Ampe F."/>
            <person name="Batut J."/>
            <person name="Boistard P."/>
            <person name="Becker A."/>
            <person name="Boutry M."/>
            <person name="Cadieu E."/>
            <person name="Dreano S."/>
            <person name="Gloux S."/>
            <person name="Godrie T."/>
            <person name="Goffeau A."/>
            <person name="Kahn D."/>
            <person name="Kiss E."/>
            <person name="Lelaure V."/>
            <person name="Masuy D."/>
            <person name="Pohl T."/>
            <person name="Portetelle D."/>
            <person name="Puehler A."/>
            <person name="Purnelle B."/>
            <person name="Ramsperger U."/>
            <person name="Renard C."/>
            <person name="Thebault P."/>
            <person name="Vandenbol M."/>
            <person name="Weidner S."/>
            <person name="Galibert F."/>
        </authorList>
    </citation>
    <scope>NUCLEOTIDE SEQUENCE [LARGE SCALE GENOMIC DNA]</scope>
    <source>
        <strain>1021</strain>
    </source>
</reference>
<reference key="2">
    <citation type="journal article" date="2001" name="Science">
        <title>The composite genome of the legume symbiont Sinorhizobium meliloti.</title>
        <authorList>
            <person name="Galibert F."/>
            <person name="Finan T.M."/>
            <person name="Long S.R."/>
            <person name="Puehler A."/>
            <person name="Abola P."/>
            <person name="Ampe F."/>
            <person name="Barloy-Hubler F."/>
            <person name="Barnett M.J."/>
            <person name="Becker A."/>
            <person name="Boistard P."/>
            <person name="Bothe G."/>
            <person name="Boutry M."/>
            <person name="Bowser L."/>
            <person name="Buhrmester J."/>
            <person name="Cadieu E."/>
            <person name="Capela D."/>
            <person name="Chain P."/>
            <person name="Cowie A."/>
            <person name="Davis R.W."/>
            <person name="Dreano S."/>
            <person name="Federspiel N.A."/>
            <person name="Fisher R.F."/>
            <person name="Gloux S."/>
            <person name="Godrie T."/>
            <person name="Goffeau A."/>
            <person name="Golding B."/>
            <person name="Gouzy J."/>
            <person name="Gurjal M."/>
            <person name="Hernandez-Lucas I."/>
            <person name="Hong A."/>
            <person name="Huizar L."/>
            <person name="Hyman R.W."/>
            <person name="Jones T."/>
            <person name="Kahn D."/>
            <person name="Kahn M.L."/>
            <person name="Kalman S."/>
            <person name="Keating D.H."/>
            <person name="Kiss E."/>
            <person name="Komp C."/>
            <person name="Lelaure V."/>
            <person name="Masuy D."/>
            <person name="Palm C."/>
            <person name="Peck M.C."/>
            <person name="Pohl T.M."/>
            <person name="Portetelle D."/>
            <person name="Purnelle B."/>
            <person name="Ramsperger U."/>
            <person name="Surzycki R."/>
            <person name="Thebault P."/>
            <person name="Vandenbol M."/>
            <person name="Vorhoelter F.J."/>
            <person name="Weidner S."/>
            <person name="Wells D.H."/>
            <person name="Wong K."/>
            <person name="Yeh K.-C."/>
            <person name="Batut J."/>
        </authorList>
    </citation>
    <scope>NUCLEOTIDE SEQUENCE [LARGE SCALE GENOMIC DNA]</scope>
    <source>
        <strain>1021</strain>
    </source>
</reference>
<feature type="chain" id="PRO_0000141267" description="Hydrogenobyrinate a,c-diamide synthase">
    <location>
        <begin position="1"/>
        <end position="429"/>
    </location>
</feature>
<feature type="domain" description="GATase cobBQ-type" evidence="1">
    <location>
        <begin position="240"/>
        <end position="429"/>
    </location>
</feature>
<feature type="active site" description="Nucleophile" evidence="1">
    <location>
        <position position="323"/>
    </location>
</feature>
<feature type="site" description="Increases nucleophilicity of active site Cys" evidence="1">
    <location>
        <position position="423"/>
    </location>
</feature>
<proteinExistence type="inferred from homology"/>
<gene>
    <name evidence="1" type="primary">cobB</name>
    <name type="ordered locus">R01945</name>
    <name type="ORF">SMc04282</name>
</gene>
<dbReference type="EC" id="6.3.5.9" evidence="1"/>
<dbReference type="EMBL" id="AL591688">
    <property type="protein sequence ID" value="CAC46524.1"/>
    <property type="molecule type" value="Genomic_DNA"/>
</dbReference>
<dbReference type="RefSeq" id="NP_386051.1">
    <property type="nucleotide sequence ID" value="NC_003047.1"/>
</dbReference>
<dbReference type="RefSeq" id="WP_010969584.1">
    <property type="nucleotide sequence ID" value="NC_003047.1"/>
</dbReference>
<dbReference type="SMR" id="Q92P48"/>
<dbReference type="EnsemblBacteria" id="CAC46524">
    <property type="protein sequence ID" value="CAC46524"/>
    <property type="gene ID" value="SMc04282"/>
</dbReference>
<dbReference type="KEGG" id="sme:SMc04282"/>
<dbReference type="PATRIC" id="fig|266834.11.peg.3393"/>
<dbReference type="eggNOG" id="COG1797">
    <property type="taxonomic scope" value="Bacteria"/>
</dbReference>
<dbReference type="HOGENOM" id="CLU_022752_0_0_5"/>
<dbReference type="OrthoDB" id="9764035at2"/>
<dbReference type="UniPathway" id="UPA00148">
    <property type="reaction ID" value="UER00220"/>
</dbReference>
<dbReference type="Proteomes" id="UP000001976">
    <property type="component" value="Chromosome"/>
</dbReference>
<dbReference type="GO" id="GO:0005524">
    <property type="term" value="F:ATP binding"/>
    <property type="evidence" value="ECO:0007669"/>
    <property type="project" value="UniProtKB-UniRule"/>
</dbReference>
<dbReference type="GO" id="GO:0042242">
    <property type="term" value="F:cobyrinic acid a,c-diamide synthase activity"/>
    <property type="evidence" value="ECO:0007669"/>
    <property type="project" value="InterPro"/>
</dbReference>
<dbReference type="GO" id="GO:0043802">
    <property type="term" value="F:hydrogenobyrinic acid a,c-diamide synthase (glutamine-hydrolysing) activity"/>
    <property type="evidence" value="ECO:0007669"/>
    <property type="project" value="UniProtKB-UniRule"/>
</dbReference>
<dbReference type="GO" id="GO:0009236">
    <property type="term" value="P:cobalamin biosynthetic process"/>
    <property type="evidence" value="ECO:0007669"/>
    <property type="project" value="UniProtKB-UniRule"/>
</dbReference>
<dbReference type="Gene3D" id="3.40.50.880">
    <property type="match status" value="1"/>
</dbReference>
<dbReference type="Gene3D" id="3.40.50.300">
    <property type="entry name" value="P-loop containing nucleotide triphosphate hydrolases"/>
    <property type="match status" value="2"/>
</dbReference>
<dbReference type="HAMAP" id="MF_00027">
    <property type="entry name" value="CobB_CbiA"/>
    <property type="match status" value="1"/>
</dbReference>
<dbReference type="InterPro" id="IPR004484">
    <property type="entry name" value="CbiA/CobB_synth"/>
</dbReference>
<dbReference type="InterPro" id="IPR029062">
    <property type="entry name" value="Class_I_gatase-like"/>
</dbReference>
<dbReference type="InterPro" id="IPR002586">
    <property type="entry name" value="CobQ/CobB/MinD/ParA_Nub-bd_dom"/>
</dbReference>
<dbReference type="InterPro" id="IPR011698">
    <property type="entry name" value="GATase_3"/>
</dbReference>
<dbReference type="InterPro" id="IPR027417">
    <property type="entry name" value="P-loop_NTPase"/>
</dbReference>
<dbReference type="NCBIfam" id="TIGR00379">
    <property type="entry name" value="cobB"/>
    <property type="match status" value="1"/>
</dbReference>
<dbReference type="NCBIfam" id="NF002204">
    <property type="entry name" value="PRK01077.1"/>
    <property type="match status" value="1"/>
</dbReference>
<dbReference type="PANTHER" id="PTHR43873">
    <property type="entry name" value="COBYRINATE A,C-DIAMIDE SYNTHASE"/>
    <property type="match status" value="1"/>
</dbReference>
<dbReference type="PANTHER" id="PTHR43873:SF1">
    <property type="entry name" value="COBYRINATE A,C-DIAMIDE SYNTHASE"/>
    <property type="match status" value="1"/>
</dbReference>
<dbReference type="Pfam" id="PF01656">
    <property type="entry name" value="CbiA"/>
    <property type="match status" value="1"/>
</dbReference>
<dbReference type="Pfam" id="PF07685">
    <property type="entry name" value="GATase_3"/>
    <property type="match status" value="1"/>
</dbReference>
<dbReference type="SUPFAM" id="SSF52317">
    <property type="entry name" value="Class I glutamine amidotransferase-like"/>
    <property type="match status" value="1"/>
</dbReference>
<dbReference type="SUPFAM" id="SSF52540">
    <property type="entry name" value="P-loop containing nucleoside triphosphate hydrolases"/>
    <property type="match status" value="1"/>
</dbReference>
<dbReference type="PROSITE" id="PS51274">
    <property type="entry name" value="GATASE_COBBQ"/>
    <property type="match status" value="1"/>
</dbReference>
<accession>Q92P48</accession>
<organism>
    <name type="scientific">Rhizobium meliloti (strain 1021)</name>
    <name type="common">Ensifer meliloti</name>
    <name type="synonym">Sinorhizobium meliloti</name>
    <dbReference type="NCBI Taxonomy" id="266834"/>
    <lineage>
        <taxon>Bacteria</taxon>
        <taxon>Pseudomonadati</taxon>
        <taxon>Pseudomonadota</taxon>
        <taxon>Alphaproteobacteria</taxon>
        <taxon>Hyphomicrobiales</taxon>
        <taxon>Rhizobiaceae</taxon>
        <taxon>Sinorhizobium/Ensifer group</taxon>
        <taxon>Sinorhizobium</taxon>
    </lineage>
</organism>
<sequence length="429" mass="45087">MNGLMIAAPSSGSGKTTVTLGLMRALRRRGLSIAPGKAGPDYIDPAFHTAASGKPCFNYDPWAMRPELLLANAAAAAEDGSVLIMEAMMGLFDGAADGTGAPADLAAALGLAVILVVDCARLSHSVAALVGGYARHRDDVRVAGVILNRVGSDRHEGMLRDALAGIAMPVFGVLRQDAALKLPERHLGLVQAGEHGSLEAFIDHAAMRVASGCDLEAVLAAATPLTVGERAGTLKPLGQRTAVARDVAFAFCYEHLLSGWRGQGAEVTFFSPLADEAPDPRADAVYLPGGYPELHAEQLSNASNFRAAMHKAAGGGARVFGECGGYMVLGEGLVAADGGRYEMLGLLPLVTSFAERKRHLGYRRVTPVDDVFFRGPMTAHEFHYATIVSEGAAEPLFTVRDAAGLDLGRAGLRRRNVAGSFMHLIDFSE</sequence>
<protein>
    <recommendedName>
        <fullName evidence="1">Hydrogenobyrinate a,c-diamide synthase</fullName>
        <ecNumber evidence="1">6.3.5.9</ecNumber>
    </recommendedName>
    <alternativeName>
        <fullName evidence="1">Hydrogenobyrinic acid a,c-diamide synthase</fullName>
    </alternativeName>
</protein>
<name>COBB_RHIME</name>
<comment type="function">
    <text evidence="1">Catalyzes the ATP-dependent amidation of the two carboxylate groups at positions a and c of hydrogenobyrinate, using either L-glutamine or ammonia as the nitrogen source.</text>
</comment>
<comment type="catalytic activity">
    <reaction evidence="1">
        <text>hydrogenobyrinate + 2 L-glutamine + 2 ATP + 2 H2O = hydrogenobyrinate a,c-diamide + 2 L-glutamate + 2 ADP + 2 phosphate + 2 H(+)</text>
        <dbReference type="Rhea" id="RHEA:12544"/>
        <dbReference type="ChEBI" id="CHEBI:15377"/>
        <dbReference type="ChEBI" id="CHEBI:15378"/>
        <dbReference type="ChEBI" id="CHEBI:29985"/>
        <dbReference type="ChEBI" id="CHEBI:30616"/>
        <dbReference type="ChEBI" id="CHEBI:43474"/>
        <dbReference type="ChEBI" id="CHEBI:58359"/>
        <dbReference type="ChEBI" id="CHEBI:77873"/>
        <dbReference type="ChEBI" id="CHEBI:77874"/>
        <dbReference type="ChEBI" id="CHEBI:456216"/>
        <dbReference type="EC" id="6.3.5.9"/>
    </reaction>
</comment>
<comment type="cofactor">
    <cofactor evidence="1">
        <name>Mg(2+)</name>
        <dbReference type="ChEBI" id="CHEBI:18420"/>
    </cofactor>
</comment>
<comment type="pathway">
    <text evidence="1">Cofactor biosynthesis; adenosylcobalamin biosynthesis; cob(II)yrinate a,c-diamide from precorrin-2 (aerobic route): step 9/10.</text>
</comment>
<comment type="domain">
    <text evidence="1">Comprises of two domains. The C-terminal domain contains the binding site for glutamine and catalyzes the hydrolysis of this substrate to glutamate and ammonia. The N-terminal domain is anticipated to bind ATP and hydrogenobyrinate and catalyzes the ultimate synthesis of the diamide product. The ammonia produced via the glutaminase domain is probably translocated to the adjacent domain via a molecular tunnel, where it reacts with an activated intermediate.</text>
</comment>
<comment type="miscellaneous">
    <text evidence="1">The a and c carboxylates of hydrogenobyrinate are activated for nucleophilic attack via formation of a phosphorylated intermediate by ATP. CobB catalyzes first the amidation of the c-carboxylate, and then that of the a-carboxylate.</text>
</comment>
<comment type="similarity">
    <text evidence="1">Belongs to the CobB/CbiA family.</text>
</comment>